<reference key="1">
    <citation type="journal article" date="1995" name="Science">
        <title>Whole-genome random sequencing and assembly of Haemophilus influenzae Rd.</title>
        <authorList>
            <person name="Fleischmann R.D."/>
            <person name="Adams M.D."/>
            <person name="White O."/>
            <person name="Clayton R.A."/>
            <person name="Kirkness E.F."/>
            <person name="Kerlavage A.R."/>
            <person name="Bult C.J."/>
            <person name="Tomb J.-F."/>
            <person name="Dougherty B.A."/>
            <person name="Merrick J.M."/>
            <person name="McKenney K."/>
            <person name="Sutton G.G."/>
            <person name="FitzHugh W."/>
            <person name="Fields C.A."/>
            <person name="Gocayne J.D."/>
            <person name="Scott J.D."/>
            <person name="Shirley R."/>
            <person name="Liu L.-I."/>
            <person name="Glodek A."/>
            <person name="Kelley J.M."/>
            <person name="Weidman J.F."/>
            <person name="Phillips C.A."/>
            <person name="Spriggs T."/>
            <person name="Hedblom E."/>
            <person name="Cotton M.D."/>
            <person name="Utterback T.R."/>
            <person name="Hanna M.C."/>
            <person name="Nguyen D.T."/>
            <person name="Saudek D.M."/>
            <person name="Brandon R.C."/>
            <person name="Fine L.D."/>
            <person name="Fritchman J.L."/>
            <person name="Fuhrmann J.L."/>
            <person name="Geoghagen N.S.M."/>
            <person name="Gnehm C.L."/>
            <person name="McDonald L.A."/>
            <person name="Small K.V."/>
            <person name="Fraser C.M."/>
            <person name="Smith H.O."/>
            <person name="Venter J.C."/>
        </authorList>
    </citation>
    <scope>NUCLEOTIDE SEQUENCE [LARGE SCALE GENOMIC DNA]</scope>
    <source>
        <strain>ATCC 51907 / DSM 11121 / KW20 / Rd</strain>
    </source>
</reference>
<accession>Q57409</accession>
<accession>O05025</accession>
<name>Y555_HAEIN</name>
<feature type="chain" id="PRO_0000077932" description="Uncharacterized protein HI_0555">
    <location>
        <begin position="1"/>
        <end position="79"/>
    </location>
</feature>
<protein>
    <recommendedName>
        <fullName>Uncharacterized protein HI_0555</fullName>
    </recommendedName>
</protein>
<gene>
    <name type="ordered locus">HI_0555</name>
</gene>
<organism>
    <name type="scientific">Haemophilus influenzae (strain ATCC 51907 / DSM 11121 / KW20 / Rd)</name>
    <dbReference type="NCBI Taxonomy" id="71421"/>
    <lineage>
        <taxon>Bacteria</taxon>
        <taxon>Pseudomonadati</taxon>
        <taxon>Pseudomonadota</taxon>
        <taxon>Gammaproteobacteria</taxon>
        <taxon>Pasteurellales</taxon>
        <taxon>Pasteurellaceae</taxon>
        <taxon>Haemophilus</taxon>
    </lineage>
</organism>
<dbReference type="EMBL" id="L42023">
    <property type="protein sequence ID" value="AAC22211.1"/>
    <property type="molecule type" value="Genomic_DNA"/>
</dbReference>
<dbReference type="RefSeq" id="NP_438713.1">
    <property type="nucleotide sequence ID" value="NC_000907.1"/>
</dbReference>
<dbReference type="SMR" id="Q57409"/>
<dbReference type="STRING" id="71421.HI_0555"/>
<dbReference type="EnsemblBacteria" id="AAC22211">
    <property type="protein sequence ID" value="AAC22211"/>
    <property type="gene ID" value="HI_0555"/>
</dbReference>
<dbReference type="KEGG" id="hin:HI_0555"/>
<dbReference type="eggNOG" id="COG3759">
    <property type="taxonomic scope" value="Bacteria"/>
</dbReference>
<dbReference type="HOGENOM" id="CLU_2601169_0_0_6"/>
<dbReference type="OrthoDB" id="9803832at2"/>
<dbReference type="BioCyc" id="HINF71421:G1GJ1-568-MONOMER"/>
<dbReference type="Proteomes" id="UP000000579">
    <property type="component" value="Chromosome"/>
</dbReference>
<dbReference type="InterPro" id="IPR009732">
    <property type="entry name" value="DUF1304"/>
</dbReference>
<dbReference type="PANTHER" id="PTHR38446">
    <property type="entry name" value="BLL0914 PROTEIN"/>
    <property type="match status" value="1"/>
</dbReference>
<dbReference type="PANTHER" id="PTHR38446:SF1">
    <property type="entry name" value="BLL0914 PROTEIN"/>
    <property type="match status" value="1"/>
</dbReference>
<keyword id="KW-1185">Reference proteome</keyword>
<sequence length="79" mass="9646">MEILAYILTALVTLEHFYILYLEMFTIESKSGVRQSRVIQRLFGSRDYFWLCHQPNFGDLFLFRLCDYRRSFWGSYDEE</sequence>
<proteinExistence type="predicted"/>